<sequence length="201" mass="22632">MKTYRDHYFLKAKQENYPARSIYKLKEIDNRFKLFRQGMKVLDLGAAPGSWSLGAAERVGPKGRVLACDLQTTDTQFPPNVTFMQEDVFNRSEAFEDALAAMGPFHVVISDMAPRTTGTRFTDQARSLELCIEALAVADHCLIKGGSFVVKIFMGPDVKQLLDALRARFETVKTFKPKSSRVESKETFYVCLGYRGDGQQD</sequence>
<evidence type="ECO:0000255" key="1">
    <source>
        <dbReference type="HAMAP-Rule" id="MF_01547"/>
    </source>
</evidence>
<dbReference type="EC" id="2.1.1.166" evidence="1"/>
<dbReference type="EMBL" id="CP001197">
    <property type="protein sequence ID" value="ACL10136.1"/>
    <property type="molecule type" value="Genomic_DNA"/>
</dbReference>
<dbReference type="SMR" id="B8DNJ4"/>
<dbReference type="STRING" id="883.DvMF_3200"/>
<dbReference type="KEGG" id="dvm:DvMF_3200"/>
<dbReference type="eggNOG" id="COG0293">
    <property type="taxonomic scope" value="Bacteria"/>
</dbReference>
<dbReference type="HOGENOM" id="CLU_009422_4_0_7"/>
<dbReference type="OrthoDB" id="9790080at2"/>
<dbReference type="GO" id="GO:0005737">
    <property type="term" value="C:cytoplasm"/>
    <property type="evidence" value="ECO:0007669"/>
    <property type="project" value="UniProtKB-SubCell"/>
</dbReference>
<dbReference type="GO" id="GO:0008650">
    <property type="term" value="F:rRNA (uridine-2'-O-)-methyltransferase activity"/>
    <property type="evidence" value="ECO:0007669"/>
    <property type="project" value="UniProtKB-UniRule"/>
</dbReference>
<dbReference type="CDD" id="cd02440">
    <property type="entry name" value="AdoMet_MTases"/>
    <property type="match status" value="1"/>
</dbReference>
<dbReference type="Gene3D" id="3.40.50.150">
    <property type="entry name" value="Vaccinia Virus protein VP39"/>
    <property type="match status" value="1"/>
</dbReference>
<dbReference type="HAMAP" id="MF_01547">
    <property type="entry name" value="RNA_methyltr_E"/>
    <property type="match status" value="1"/>
</dbReference>
<dbReference type="InterPro" id="IPR050082">
    <property type="entry name" value="RNA_methyltr_RlmE"/>
</dbReference>
<dbReference type="InterPro" id="IPR002877">
    <property type="entry name" value="RNA_MeTrfase_FtsJ_dom"/>
</dbReference>
<dbReference type="InterPro" id="IPR015507">
    <property type="entry name" value="rRNA-MeTfrase_E"/>
</dbReference>
<dbReference type="InterPro" id="IPR029063">
    <property type="entry name" value="SAM-dependent_MTases_sf"/>
</dbReference>
<dbReference type="PANTHER" id="PTHR10920">
    <property type="entry name" value="RIBOSOMAL RNA METHYLTRANSFERASE"/>
    <property type="match status" value="1"/>
</dbReference>
<dbReference type="PANTHER" id="PTHR10920:SF18">
    <property type="entry name" value="RRNA METHYLTRANSFERASE 2, MITOCHONDRIAL"/>
    <property type="match status" value="1"/>
</dbReference>
<dbReference type="Pfam" id="PF01728">
    <property type="entry name" value="FtsJ"/>
    <property type="match status" value="1"/>
</dbReference>
<dbReference type="PIRSF" id="PIRSF005461">
    <property type="entry name" value="23S_rRNA_mtase"/>
    <property type="match status" value="1"/>
</dbReference>
<dbReference type="SUPFAM" id="SSF53335">
    <property type="entry name" value="S-adenosyl-L-methionine-dependent methyltransferases"/>
    <property type="match status" value="1"/>
</dbReference>
<comment type="function">
    <text evidence="1">Specifically methylates the uridine in position 2552 of 23S rRNA at the 2'-O position of the ribose in the fully assembled 50S ribosomal subunit.</text>
</comment>
<comment type="catalytic activity">
    <reaction evidence="1">
        <text>uridine(2552) in 23S rRNA + S-adenosyl-L-methionine = 2'-O-methyluridine(2552) in 23S rRNA + S-adenosyl-L-homocysteine + H(+)</text>
        <dbReference type="Rhea" id="RHEA:42720"/>
        <dbReference type="Rhea" id="RHEA-COMP:10202"/>
        <dbReference type="Rhea" id="RHEA-COMP:10203"/>
        <dbReference type="ChEBI" id="CHEBI:15378"/>
        <dbReference type="ChEBI" id="CHEBI:57856"/>
        <dbReference type="ChEBI" id="CHEBI:59789"/>
        <dbReference type="ChEBI" id="CHEBI:65315"/>
        <dbReference type="ChEBI" id="CHEBI:74478"/>
        <dbReference type="EC" id="2.1.1.166"/>
    </reaction>
</comment>
<comment type="subcellular location">
    <subcellularLocation>
        <location evidence="1">Cytoplasm</location>
    </subcellularLocation>
</comment>
<comment type="similarity">
    <text evidence="1">Belongs to the class I-like SAM-binding methyltransferase superfamily. RNA methyltransferase RlmE family.</text>
</comment>
<proteinExistence type="inferred from homology"/>
<name>RLME_NITV9</name>
<organism>
    <name type="scientific">Nitratidesulfovibrio vulgaris (strain DSM 19637 / Miyazaki F)</name>
    <name type="common">Desulfovibrio vulgaris</name>
    <dbReference type="NCBI Taxonomy" id="883"/>
    <lineage>
        <taxon>Bacteria</taxon>
        <taxon>Pseudomonadati</taxon>
        <taxon>Thermodesulfobacteriota</taxon>
        <taxon>Desulfovibrionia</taxon>
        <taxon>Desulfovibrionales</taxon>
        <taxon>Desulfovibrionaceae</taxon>
        <taxon>Nitratidesulfovibrio</taxon>
    </lineage>
</organism>
<protein>
    <recommendedName>
        <fullName evidence="1">Ribosomal RNA large subunit methyltransferase E</fullName>
        <ecNumber evidence="1">2.1.1.166</ecNumber>
    </recommendedName>
    <alternativeName>
        <fullName evidence="1">23S rRNA Um2552 methyltransferase</fullName>
    </alternativeName>
    <alternativeName>
        <fullName evidence="1">rRNA (uridine-2'-O-)-methyltransferase</fullName>
    </alternativeName>
</protein>
<reference key="1">
    <citation type="submission" date="2008-10" db="EMBL/GenBank/DDBJ databases">
        <title>Complete sequence of Desulfovibrio vulgaris str. 'Miyazaki F'.</title>
        <authorList>
            <person name="Lucas S."/>
            <person name="Copeland A."/>
            <person name="Lapidus A."/>
            <person name="Glavina del Rio T."/>
            <person name="Dalin E."/>
            <person name="Tice H."/>
            <person name="Bruce D."/>
            <person name="Goodwin L."/>
            <person name="Pitluck S."/>
            <person name="Sims D."/>
            <person name="Brettin T."/>
            <person name="Detter J.C."/>
            <person name="Han C."/>
            <person name="Larimer F."/>
            <person name="Land M."/>
            <person name="Hauser L."/>
            <person name="Kyrpides N."/>
            <person name="Mikhailova N."/>
            <person name="Hazen T.C."/>
            <person name="Richardson P."/>
        </authorList>
    </citation>
    <scope>NUCLEOTIDE SEQUENCE [LARGE SCALE GENOMIC DNA]</scope>
    <source>
        <strain>DSM 19637 / Miyazaki F</strain>
    </source>
</reference>
<keyword id="KW-0963">Cytoplasm</keyword>
<keyword id="KW-0489">Methyltransferase</keyword>
<keyword id="KW-0698">rRNA processing</keyword>
<keyword id="KW-0949">S-adenosyl-L-methionine</keyword>
<keyword id="KW-0808">Transferase</keyword>
<gene>
    <name evidence="1" type="primary">rlmE</name>
    <name evidence="1" type="synonym">ftsJ</name>
    <name evidence="1" type="synonym">rrmJ</name>
    <name type="ordered locus">DvMF_3200</name>
</gene>
<accession>B8DNJ4</accession>
<feature type="chain" id="PRO_1000194989" description="Ribosomal RNA large subunit methyltransferase E">
    <location>
        <begin position="1"/>
        <end position="201"/>
    </location>
</feature>
<feature type="active site" description="Proton acceptor" evidence="1">
    <location>
        <position position="151"/>
    </location>
</feature>
<feature type="binding site" evidence="1">
    <location>
        <position position="49"/>
    </location>
    <ligand>
        <name>S-adenosyl-L-methionine</name>
        <dbReference type="ChEBI" id="CHEBI:59789"/>
    </ligand>
</feature>
<feature type="binding site" evidence="1">
    <location>
        <position position="51"/>
    </location>
    <ligand>
        <name>S-adenosyl-L-methionine</name>
        <dbReference type="ChEBI" id="CHEBI:59789"/>
    </ligand>
</feature>
<feature type="binding site" evidence="1">
    <location>
        <position position="69"/>
    </location>
    <ligand>
        <name>S-adenosyl-L-methionine</name>
        <dbReference type="ChEBI" id="CHEBI:59789"/>
    </ligand>
</feature>
<feature type="binding site" evidence="1">
    <location>
        <position position="87"/>
    </location>
    <ligand>
        <name>S-adenosyl-L-methionine</name>
        <dbReference type="ChEBI" id="CHEBI:59789"/>
    </ligand>
</feature>
<feature type="binding site" evidence="1">
    <location>
        <position position="111"/>
    </location>
    <ligand>
        <name>S-adenosyl-L-methionine</name>
        <dbReference type="ChEBI" id="CHEBI:59789"/>
    </ligand>
</feature>